<evidence type="ECO:0000255" key="1">
    <source>
        <dbReference type="HAMAP-Rule" id="MF_00291"/>
    </source>
</evidence>
<evidence type="ECO:0000256" key="2">
    <source>
        <dbReference type="SAM" id="MobiDB-lite"/>
    </source>
</evidence>
<evidence type="ECO:0000305" key="3"/>
<dbReference type="EMBL" id="CR925677">
    <property type="protein sequence ID" value="CAI27976.1"/>
    <property type="molecule type" value="Genomic_DNA"/>
</dbReference>
<dbReference type="RefSeq" id="WP_011155189.1">
    <property type="nucleotide sequence ID" value="NC_006831.1"/>
</dbReference>
<dbReference type="SMR" id="Q5FGZ8"/>
<dbReference type="GeneID" id="33058073"/>
<dbReference type="KEGG" id="erg:ERGA_CDS_05240"/>
<dbReference type="HOGENOM" id="CLU_040318_2_1_5"/>
<dbReference type="OrthoDB" id="9808036at2"/>
<dbReference type="Proteomes" id="UP000000533">
    <property type="component" value="Chromosome"/>
</dbReference>
<dbReference type="GO" id="GO:0022627">
    <property type="term" value="C:cytosolic small ribosomal subunit"/>
    <property type="evidence" value="ECO:0007669"/>
    <property type="project" value="TreeGrafter"/>
</dbReference>
<dbReference type="GO" id="GO:0003735">
    <property type="term" value="F:structural constituent of ribosome"/>
    <property type="evidence" value="ECO:0007669"/>
    <property type="project" value="InterPro"/>
</dbReference>
<dbReference type="GO" id="GO:0006412">
    <property type="term" value="P:translation"/>
    <property type="evidence" value="ECO:0007669"/>
    <property type="project" value="UniProtKB-UniRule"/>
</dbReference>
<dbReference type="CDD" id="cd01425">
    <property type="entry name" value="RPS2"/>
    <property type="match status" value="1"/>
</dbReference>
<dbReference type="Gene3D" id="3.40.50.10490">
    <property type="entry name" value="Glucose-6-phosphate isomerase like protein, domain 1"/>
    <property type="match status" value="1"/>
</dbReference>
<dbReference type="Gene3D" id="1.10.287.610">
    <property type="entry name" value="Helix hairpin bin"/>
    <property type="match status" value="1"/>
</dbReference>
<dbReference type="HAMAP" id="MF_00291_B">
    <property type="entry name" value="Ribosomal_uS2_B"/>
    <property type="match status" value="1"/>
</dbReference>
<dbReference type="InterPro" id="IPR001865">
    <property type="entry name" value="Ribosomal_uS2"/>
</dbReference>
<dbReference type="InterPro" id="IPR005706">
    <property type="entry name" value="Ribosomal_uS2_bac/mit/plastid"/>
</dbReference>
<dbReference type="InterPro" id="IPR018130">
    <property type="entry name" value="Ribosomal_uS2_CS"/>
</dbReference>
<dbReference type="InterPro" id="IPR023591">
    <property type="entry name" value="Ribosomal_uS2_flav_dom_sf"/>
</dbReference>
<dbReference type="NCBIfam" id="TIGR01011">
    <property type="entry name" value="rpsB_bact"/>
    <property type="match status" value="1"/>
</dbReference>
<dbReference type="PANTHER" id="PTHR12534">
    <property type="entry name" value="30S RIBOSOMAL PROTEIN S2 PROKARYOTIC AND ORGANELLAR"/>
    <property type="match status" value="1"/>
</dbReference>
<dbReference type="PANTHER" id="PTHR12534:SF0">
    <property type="entry name" value="SMALL RIBOSOMAL SUBUNIT PROTEIN US2M"/>
    <property type="match status" value="1"/>
</dbReference>
<dbReference type="Pfam" id="PF00318">
    <property type="entry name" value="Ribosomal_S2"/>
    <property type="match status" value="1"/>
</dbReference>
<dbReference type="PRINTS" id="PR00395">
    <property type="entry name" value="RIBOSOMALS2"/>
</dbReference>
<dbReference type="SUPFAM" id="SSF52313">
    <property type="entry name" value="Ribosomal protein S2"/>
    <property type="match status" value="1"/>
</dbReference>
<dbReference type="PROSITE" id="PS00962">
    <property type="entry name" value="RIBOSOMAL_S2_1"/>
    <property type="match status" value="1"/>
</dbReference>
<dbReference type="PROSITE" id="PS00963">
    <property type="entry name" value="RIBOSOMAL_S2_2"/>
    <property type="match status" value="1"/>
</dbReference>
<organism>
    <name type="scientific">Ehrlichia ruminantium (strain Gardel)</name>
    <dbReference type="NCBI Taxonomy" id="302409"/>
    <lineage>
        <taxon>Bacteria</taxon>
        <taxon>Pseudomonadati</taxon>
        <taxon>Pseudomonadota</taxon>
        <taxon>Alphaproteobacteria</taxon>
        <taxon>Rickettsiales</taxon>
        <taxon>Anaplasmataceae</taxon>
        <taxon>Ehrlichia</taxon>
    </lineage>
</organism>
<gene>
    <name evidence="1" type="primary">rpsB</name>
    <name type="ordered locus">ERGA_CDS_05240</name>
</gene>
<accession>Q5FGZ8</accession>
<protein>
    <recommendedName>
        <fullName evidence="1">Small ribosomal subunit protein uS2</fullName>
    </recommendedName>
    <alternativeName>
        <fullName evidence="3">30S ribosomal protein S2</fullName>
    </alternativeName>
</protein>
<keyword id="KW-0687">Ribonucleoprotein</keyword>
<keyword id="KW-0689">Ribosomal protein</keyword>
<name>RS2_EHRRG</name>
<proteinExistence type="inferred from homology"/>
<feature type="chain" id="PRO_1000003957" description="Small ribosomal subunit protein uS2">
    <location>
        <begin position="1"/>
        <end position="286"/>
    </location>
</feature>
<feature type="region of interest" description="Disordered" evidence="2">
    <location>
        <begin position="257"/>
        <end position="286"/>
    </location>
</feature>
<reference key="1">
    <citation type="journal article" date="2006" name="J. Bacteriol.">
        <title>Comparative genomic analysis of three strains of Ehrlichia ruminantium reveals an active process of genome size plasticity.</title>
        <authorList>
            <person name="Frutos R."/>
            <person name="Viari A."/>
            <person name="Ferraz C."/>
            <person name="Morgat A."/>
            <person name="Eychenie S."/>
            <person name="Kandassamy Y."/>
            <person name="Chantal I."/>
            <person name="Bensaid A."/>
            <person name="Coissac E."/>
            <person name="Vachiery N."/>
            <person name="Demaille J."/>
            <person name="Martinez D."/>
        </authorList>
    </citation>
    <scope>NUCLEOTIDE SEQUENCE [LARGE SCALE GENOMIC DNA]</scope>
    <source>
        <strain>Gardel</strain>
    </source>
</reference>
<sequence>MVDLPKFTMRDLVECGVHFGHKTSRWNPKMAPYIYGVHNDIHIINLQSTVFLLKNALSALYDIVLKRGRVLFIGTKVQASAIIADEATRCGQYYINNRWLGGMLTNWETISLSIKKLREYEKLLQNVDNQFTKKELLLFEKKRAKLDRSIGGICNMGGLPHVIFVIDTNKERIAIREANKLNIPVIAVLDTNSDPTGIDYPIPGNDDAVRSIDFFCKIISDTILEAIRSDLAKSGINVDGIKDFSVERREDFLKMNKDNKSNKSNTINADENIKESDLIGGSNNEG</sequence>
<comment type="similarity">
    <text evidence="1">Belongs to the universal ribosomal protein uS2 family.</text>
</comment>